<feature type="chain" id="PRO_1000077193" description="Serine--tRNA ligase">
    <location>
        <begin position="1"/>
        <end position="423"/>
    </location>
</feature>
<feature type="region of interest" description="Disordered" evidence="2">
    <location>
        <begin position="107"/>
        <end position="130"/>
    </location>
</feature>
<feature type="compositionally biased region" description="Basic and acidic residues" evidence="2">
    <location>
        <begin position="110"/>
        <end position="124"/>
    </location>
</feature>
<feature type="binding site" evidence="1">
    <location>
        <begin position="231"/>
        <end position="233"/>
    </location>
    <ligand>
        <name>L-serine</name>
        <dbReference type="ChEBI" id="CHEBI:33384"/>
    </ligand>
</feature>
<feature type="binding site" evidence="1">
    <location>
        <begin position="262"/>
        <end position="264"/>
    </location>
    <ligand>
        <name>ATP</name>
        <dbReference type="ChEBI" id="CHEBI:30616"/>
    </ligand>
</feature>
<feature type="binding site" evidence="1">
    <location>
        <position position="285"/>
    </location>
    <ligand>
        <name>L-serine</name>
        <dbReference type="ChEBI" id="CHEBI:33384"/>
    </ligand>
</feature>
<feature type="binding site" evidence="1">
    <location>
        <begin position="349"/>
        <end position="352"/>
    </location>
    <ligand>
        <name>ATP</name>
        <dbReference type="ChEBI" id="CHEBI:30616"/>
    </ligand>
</feature>
<feature type="binding site" evidence="1">
    <location>
        <position position="385"/>
    </location>
    <ligand>
        <name>L-serine</name>
        <dbReference type="ChEBI" id="CHEBI:33384"/>
    </ligand>
</feature>
<dbReference type="EC" id="6.1.1.11" evidence="1"/>
<dbReference type="EMBL" id="CP000733">
    <property type="protein sequence ID" value="ABS76751.1"/>
    <property type="molecule type" value="Genomic_DNA"/>
</dbReference>
<dbReference type="RefSeq" id="WP_011997011.1">
    <property type="nucleotide sequence ID" value="NC_009727.1"/>
</dbReference>
<dbReference type="SMR" id="A9KFP4"/>
<dbReference type="KEGG" id="cbd:CBUD_1278"/>
<dbReference type="HOGENOM" id="CLU_023797_1_1_6"/>
<dbReference type="UniPathway" id="UPA00906">
    <property type="reaction ID" value="UER00895"/>
</dbReference>
<dbReference type="Proteomes" id="UP000008555">
    <property type="component" value="Chromosome"/>
</dbReference>
<dbReference type="GO" id="GO:0005737">
    <property type="term" value="C:cytoplasm"/>
    <property type="evidence" value="ECO:0007669"/>
    <property type="project" value="UniProtKB-SubCell"/>
</dbReference>
<dbReference type="GO" id="GO:0005524">
    <property type="term" value="F:ATP binding"/>
    <property type="evidence" value="ECO:0007669"/>
    <property type="project" value="UniProtKB-UniRule"/>
</dbReference>
<dbReference type="GO" id="GO:0004828">
    <property type="term" value="F:serine-tRNA ligase activity"/>
    <property type="evidence" value="ECO:0007669"/>
    <property type="project" value="UniProtKB-UniRule"/>
</dbReference>
<dbReference type="GO" id="GO:0016260">
    <property type="term" value="P:selenocysteine biosynthetic process"/>
    <property type="evidence" value="ECO:0007669"/>
    <property type="project" value="UniProtKB-UniRule"/>
</dbReference>
<dbReference type="GO" id="GO:0006434">
    <property type="term" value="P:seryl-tRNA aminoacylation"/>
    <property type="evidence" value="ECO:0007669"/>
    <property type="project" value="UniProtKB-UniRule"/>
</dbReference>
<dbReference type="CDD" id="cd00770">
    <property type="entry name" value="SerRS_core"/>
    <property type="match status" value="1"/>
</dbReference>
<dbReference type="Gene3D" id="3.30.930.10">
    <property type="entry name" value="Bira Bifunctional Protein, Domain 2"/>
    <property type="match status" value="1"/>
</dbReference>
<dbReference type="Gene3D" id="1.10.287.40">
    <property type="entry name" value="Serine-tRNA synthetase, tRNA binding domain"/>
    <property type="match status" value="1"/>
</dbReference>
<dbReference type="HAMAP" id="MF_00176">
    <property type="entry name" value="Ser_tRNA_synth_type1"/>
    <property type="match status" value="1"/>
</dbReference>
<dbReference type="InterPro" id="IPR002314">
    <property type="entry name" value="aa-tRNA-synt_IIb"/>
</dbReference>
<dbReference type="InterPro" id="IPR006195">
    <property type="entry name" value="aa-tRNA-synth_II"/>
</dbReference>
<dbReference type="InterPro" id="IPR045864">
    <property type="entry name" value="aa-tRNA-synth_II/BPL/LPL"/>
</dbReference>
<dbReference type="InterPro" id="IPR002317">
    <property type="entry name" value="Ser-tRNA-ligase_type_1"/>
</dbReference>
<dbReference type="InterPro" id="IPR015866">
    <property type="entry name" value="Ser-tRNA-synth_1_N"/>
</dbReference>
<dbReference type="InterPro" id="IPR042103">
    <property type="entry name" value="SerRS_1_N_sf"/>
</dbReference>
<dbReference type="InterPro" id="IPR033729">
    <property type="entry name" value="SerRS_core"/>
</dbReference>
<dbReference type="InterPro" id="IPR010978">
    <property type="entry name" value="tRNA-bd_arm"/>
</dbReference>
<dbReference type="NCBIfam" id="TIGR00414">
    <property type="entry name" value="serS"/>
    <property type="match status" value="1"/>
</dbReference>
<dbReference type="PANTHER" id="PTHR43697:SF1">
    <property type="entry name" value="SERINE--TRNA LIGASE"/>
    <property type="match status" value="1"/>
</dbReference>
<dbReference type="PANTHER" id="PTHR43697">
    <property type="entry name" value="SERYL-TRNA SYNTHETASE"/>
    <property type="match status" value="1"/>
</dbReference>
<dbReference type="Pfam" id="PF02403">
    <property type="entry name" value="Seryl_tRNA_N"/>
    <property type="match status" value="1"/>
</dbReference>
<dbReference type="Pfam" id="PF00587">
    <property type="entry name" value="tRNA-synt_2b"/>
    <property type="match status" value="1"/>
</dbReference>
<dbReference type="PIRSF" id="PIRSF001529">
    <property type="entry name" value="Ser-tRNA-synth_IIa"/>
    <property type="match status" value="1"/>
</dbReference>
<dbReference type="PRINTS" id="PR00981">
    <property type="entry name" value="TRNASYNTHSER"/>
</dbReference>
<dbReference type="SUPFAM" id="SSF55681">
    <property type="entry name" value="Class II aaRS and biotin synthetases"/>
    <property type="match status" value="1"/>
</dbReference>
<dbReference type="SUPFAM" id="SSF46589">
    <property type="entry name" value="tRNA-binding arm"/>
    <property type="match status" value="1"/>
</dbReference>
<dbReference type="PROSITE" id="PS50862">
    <property type="entry name" value="AA_TRNA_LIGASE_II"/>
    <property type="match status" value="1"/>
</dbReference>
<reference key="1">
    <citation type="journal article" date="2009" name="Infect. Immun.">
        <title>Comparative genomics reveal extensive transposon-mediated genomic plasticity and diversity among potential effector proteins within the genus Coxiella.</title>
        <authorList>
            <person name="Beare P.A."/>
            <person name="Unsworth N."/>
            <person name="Andoh M."/>
            <person name="Voth D.E."/>
            <person name="Omsland A."/>
            <person name="Gilk S.D."/>
            <person name="Williams K.P."/>
            <person name="Sobral B.W."/>
            <person name="Kupko J.J. III"/>
            <person name="Porcella S.F."/>
            <person name="Samuel J.E."/>
            <person name="Heinzen R.A."/>
        </authorList>
    </citation>
    <scope>NUCLEOTIDE SEQUENCE [LARGE SCALE GENOMIC DNA]</scope>
    <source>
        <strain>Dugway 5J108-111</strain>
    </source>
</reference>
<keyword id="KW-0030">Aminoacyl-tRNA synthetase</keyword>
<keyword id="KW-0067">ATP-binding</keyword>
<keyword id="KW-0963">Cytoplasm</keyword>
<keyword id="KW-0436">Ligase</keyword>
<keyword id="KW-0547">Nucleotide-binding</keyword>
<keyword id="KW-0648">Protein biosynthesis</keyword>
<accession>A9KFP4</accession>
<gene>
    <name evidence="1" type="primary">serS</name>
    <name type="ordered locus">CBUD_1278</name>
</gene>
<protein>
    <recommendedName>
        <fullName evidence="1">Serine--tRNA ligase</fullName>
        <ecNumber evidence="1">6.1.1.11</ecNumber>
    </recommendedName>
    <alternativeName>
        <fullName evidence="1">Seryl-tRNA synthetase</fullName>
        <shortName evidence="1">SerRS</shortName>
    </alternativeName>
    <alternativeName>
        <fullName evidence="1">Seryl-tRNA(Ser/Sec) synthetase</fullName>
    </alternativeName>
</protein>
<evidence type="ECO:0000255" key="1">
    <source>
        <dbReference type="HAMAP-Rule" id="MF_00176"/>
    </source>
</evidence>
<evidence type="ECO:0000256" key="2">
    <source>
        <dbReference type="SAM" id="MobiDB-lite"/>
    </source>
</evidence>
<proteinExistence type="inferred from homology"/>
<name>SYS_COXBN</name>
<sequence length="423" mass="48128">MLDPKILRQNLEHVVEKLRRRGFEMDSDTFLQLENKRKEAQLAIQSFQTKRNQLSKTIGMAKSKGENPEPLMAEVSHLNDELKQEEANFETIQKAFSDFQLAIPNLPHDSVPDGKSENDNREIRQWGAPPGFDFTPKDHTVLGERDNQLDFEAAAKLSGARFVVLRGSLARAHRALAQFMLDLHTDQHGYEEVYVPYLVHEECLYGTGQLPKFREEQFQVAGDRNFFLVPTGEVPLVNLARDEIIEAPALPKKWVAQTPCFRSEAGSYGKDVRGMIRQHQFQKVELVQLVQPENSYQALEEITRQAEKVLQLLALPYRVVELCAGDLGFAAAKTYDLEVWLPSQNKYREISSCSNCEDFQARRIQARWRNPKTGKPELLHTLNGSGLAVGRTLVAVMENYQQADGHIRVPDALKSYMGGVDYF</sequence>
<comment type="function">
    <text evidence="1">Catalyzes the attachment of serine to tRNA(Ser). Is also able to aminoacylate tRNA(Sec) with serine, to form the misacylated tRNA L-seryl-tRNA(Sec), which will be further converted into selenocysteinyl-tRNA(Sec).</text>
</comment>
<comment type="catalytic activity">
    <reaction evidence="1">
        <text>tRNA(Ser) + L-serine + ATP = L-seryl-tRNA(Ser) + AMP + diphosphate + H(+)</text>
        <dbReference type="Rhea" id="RHEA:12292"/>
        <dbReference type="Rhea" id="RHEA-COMP:9669"/>
        <dbReference type="Rhea" id="RHEA-COMP:9703"/>
        <dbReference type="ChEBI" id="CHEBI:15378"/>
        <dbReference type="ChEBI" id="CHEBI:30616"/>
        <dbReference type="ChEBI" id="CHEBI:33019"/>
        <dbReference type="ChEBI" id="CHEBI:33384"/>
        <dbReference type="ChEBI" id="CHEBI:78442"/>
        <dbReference type="ChEBI" id="CHEBI:78533"/>
        <dbReference type="ChEBI" id="CHEBI:456215"/>
        <dbReference type="EC" id="6.1.1.11"/>
    </reaction>
</comment>
<comment type="catalytic activity">
    <reaction evidence="1">
        <text>tRNA(Sec) + L-serine + ATP = L-seryl-tRNA(Sec) + AMP + diphosphate + H(+)</text>
        <dbReference type="Rhea" id="RHEA:42580"/>
        <dbReference type="Rhea" id="RHEA-COMP:9742"/>
        <dbReference type="Rhea" id="RHEA-COMP:10128"/>
        <dbReference type="ChEBI" id="CHEBI:15378"/>
        <dbReference type="ChEBI" id="CHEBI:30616"/>
        <dbReference type="ChEBI" id="CHEBI:33019"/>
        <dbReference type="ChEBI" id="CHEBI:33384"/>
        <dbReference type="ChEBI" id="CHEBI:78442"/>
        <dbReference type="ChEBI" id="CHEBI:78533"/>
        <dbReference type="ChEBI" id="CHEBI:456215"/>
        <dbReference type="EC" id="6.1.1.11"/>
    </reaction>
</comment>
<comment type="pathway">
    <text evidence="1">Aminoacyl-tRNA biosynthesis; selenocysteinyl-tRNA(Sec) biosynthesis; L-seryl-tRNA(Sec) from L-serine and tRNA(Sec): step 1/1.</text>
</comment>
<comment type="subunit">
    <text evidence="1">Homodimer. The tRNA molecule binds across the dimer.</text>
</comment>
<comment type="subcellular location">
    <subcellularLocation>
        <location evidence="1">Cytoplasm</location>
    </subcellularLocation>
</comment>
<comment type="domain">
    <text evidence="1">Consists of two distinct domains, a catalytic core and a N-terminal extension that is involved in tRNA binding.</text>
</comment>
<comment type="similarity">
    <text evidence="1">Belongs to the class-II aminoacyl-tRNA synthetase family. Type-1 seryl-tRNA synthetase subfamily.</text>
</comment>
<organism>
    <name type="scientific">Coxiella burnetii (strain Dugway 5J108-111)</name>
    <dbReference type="NCBI Taxonomy" id="434922"/>
    <lineage>
        <taxon>Bacteria</taxon>
        <taxon>Pseudomonadati</taxon>
        <taxon>Pseudomonadota</taxon>
        <taxon>Gammaproteobacteria</taxon>
        <taxon>Legionellales</taxon>
        <taxon>Coxiellaceae</taxon>
        <taxon>Coxiella</taxon>
    </lineage>
</organism>